<gene>
    <name evidence="1" type="primary">lplA</name>
    <name type="ordered locus">YPA_1758</name>
</gene>
<protein>
    <recommendedName>
        <fullName evidence="1">Lipoate-protein ligase A</fullName>
        <ecNumber evidence="1">6.3.1.20</ecNumber>
    </recommendedName>
    <alternativeName>
        <fullName evidence="1">Lipoate--protein ligase</fullName>
    </alternativeName>
</protein>
<proteinExistence type="inferred from homology"/>
<comment type="function">
    <text evidence="1">Catalyzes both the ATP-dependent activation of exogenously supplied lipoate to lipoyl-AMP and the transfer of the activated lipoyl onto the lipoyl domains of lipoate-dependent enzymes.</text>
</comment>
<comment type="catalytic activity">
    <reaction evidence="1">
        <text>L-lysyl-[lipoyl-carrier protein] + (R)-lipoate + ATP = N(6)-[(R)-lipoyl]-L-lysyl-[lipoyl-carrier protein] + AMP + diphosphate + H(+)</text>
        <dbReference type="Rhea" id="RHEA:49288"/>
        <dbReference type="Rhea" id="RHEA-COMP:10500"/>
        <dbReference type="Rhea" id="RHEA-COMP:10502"/>
        <dbReference type="ChEBI" id="CHEBI:15378"/>
        <dbReference type="ChEBI" id="CHEBI:29969"/>
        <dbReference type="ChEBI" id="CHEBI:30616"/>
        <dbReference type="ChEBI" id="CHEBI:33019"/>
        <dbReference type="ChEBI" id="CHEBI:83088"/>
        <dbReference type="ChEBI" id="CHEBI:83099"/>
        <dbReference type="ChEBI" id="CHEBI:456215"/>
        <dbReference type="EC" id="6.3.1.20"/>
    </reaction>
</comment>
<comment type="pathway">
    <text evidence="1">Protein modification; protein lipoylation via exogenous pathway; protein N(6)-(lipoyl)lysine from lipoate: step 1/2.</text>
</comment>
<comment type="pathway">
    <text evidence="1">Protein modification; protein lipoylation via exogenous pathway; protein N(6)-(lipoyl)lysine from lipoate: step 2/2.</text>
</comment>
<comment type="subunit">
    <text evidence="1">Monomer.</text>
</comment>
<comment type="subcellular location">
    <subcellularLocation>
        <location evidence="1">Cytoplasm</location>
    </subcellularLocation>
</comment>
<comment type="miscellaneous">
    <text evidence="1">In the transfer reaction, the free carboxyl group of lipoic acid is attached via an amide linkage to the epsilon-amino group of a specific lysine residue of lipoyl domains of lipoate-dependent enzymes.</text>
</comment>
<comment type="similarity">
    <text evidence="1">Belongs to the LplA family.</text>
</comment>
<name>LPLA_YERPA</name>
<accession>Q1C748</accession>
<dbReference type="EC" id="6.3.1.20" evidence="1"/>
<dbReference type="EMBL" id="CP000308">
    <property type="protein sequence ID" value="ABG13724.1"/>
    <property type="molecule type" value="Genomic_DNA"/>
</dbReference>
<dbReference type="RefSeq" id="WP_002211816.1">
    <property type="nucleotide sequence ID" value="NZ_CP009906.1"/>
</dbReference>
<dbReference type="SMR" id="Q1C748"/>
<dbReference type="KEGG" id="ypa:YPA_1758"/>
<dbReference type="UniPathway" id="UPA00537">
    <property type="reaction ID" value="UER00594"/>
</dbReference>
<dbReference type="UniPathway" id="UPA00537">
    <property type="reaction ID" value="UER00595"/>
</dbReference>
<dbReference type="Proteomes" id="UP000001971">
    <property type="component" value="Chromosome"/>
</dbReference>
<dbReference type="GO" id="GO:0005829">
    <property type="term" value="C:cytosol"/>
    <property type="evidence" value="ECO:0007669"/>
    <property type="project" value="TreeGrafter"/>
</dbReference>
<dbReference type="GO" id="GO:0005524">
    <property type="term" value="F:ATP binding"/>
    <property type="evidence" value="ECO:0007669"/>
    <property type="project" value="UniProtKB-KW"/>
</dbReference>
<dbReference type="GO" id="GO:0016979">
    <property type="term" value="F:lipoate-protein ligase activity"/>
    <property type="evidence" value="ECO:0007669"/>
    <property type="project" value="UniProtKB-UniRule"/>
</dbReference>
<dbReference type="GO" id="GO:0017118">
    <property type="term" value="F:lipoyltransferase activity"/>
    <property type="evidence" value="ECO:0007669"/>
    <property type="project" value="TreeGrafter"/>
</dbReference>
<dbReference type="GO" id="GO:0036211">
    <property type="term" value="P:protein modification process"/>
    <property type="evidence" value="ECO:0007669"/>
    <property type="project" value="InterPro"/>
</dbReference>
<dbReference type="CDD" id="cd16443">
    <property type="entry name" value="LplA"/>
    <property type="match status" value="1"/>
</dbReference>
<dbReference type="FunFam" id="3.30.930.10:FF:000024">
    <property type="entry name" value="Lipoate-protein ligase A"/>
    <property type="match status" value="1"/>
</dbReference>
<dbReference type="Gene3D" id="3.30.930.10">
    <property type="entry name" value="Bira Bifunctional Protein, Domain 2"/>
    <property type="match status" value="1"/>
</dbReference>
<dbReference type="Gene3D" id="3.30.390.50">
    <property type="entry name" value="CO dehydrogenase flavoprotein, C-terminal domain"/>
    <property type="match status" value="1"/>
</dbReference>
<dbReference type="HAMAP" id="MF_01602">
    <property type="entry name" value="LplA"/>
    <property type="match status" value="1"/>
</dbReference>
<dbReference type="InterPro" id="IPR045864">
    <property type="entry name" value="aa-tRNA-synth_II/BPL/LPL"/>
</dbReference>
<dbReference type="InterPro" id="IPR004143">
    <property type="entry name" value="BPL_LPL_catalytic"/>
</dbReference>
<dbReference type="InterPro" id="IPR023741">
    <property type="entry name" value="Lipoate_ligase_A"/>
</dbReference>
<dbReference type="InterPro" id="IPR019491">
    <property type="entry name" value="Lipoate_protein_ligase_C"/>
</dbReference>
<dbReference type="InterPro" id="IPR004562">
    <property type="entry name" value="LipoylTrfase_LipoateP_Ligase"/>
</dbReference>
<dbReference type="NCBIfam" id="TIGR00545">
    <property type="entry name" value="lipoyltrans"/>
    <property type="match status" value="1"/>
</dbReference>
<dbReference type="PANTHER" id="PTHR12561">
    <property type="entry name" value="LIPOATE-PROTEIN LIGASE"/>
    <property type="match status" value="1"/>
</dbReference>
<dbReference type="PANTHER" id="PTHR12561:SF3">
    <property type="entry name" value="LIPOYLTRANSFERASE 1, MITOCHONDRIAL"/>
    <property type="match status" value="1"/>
</dbReference>
<dbReference type="Pfam" id="PF10437">
    <property type="entry name" value="Lip_prot_lig_C"/>
    <property type="match status" value="1"/>
</dbReference>
<dbReference type="Pfam" id="PF21948">
    <property type="entry name" value="LplA-B_cat"/>
    <property type="match status" value="1"/>
</dbReference>
<dbReference type="SUPFAM" id="SSF55681">
    <property type="entry name" value="Class II aaRS and biotin synthetases"/>
    <property type="match status" value="1"/>
</dbReference>
<dbReference type="SUPFAM" id="SSF82649">
    <property type="entry name" value="SufE/NifU"/>
    <property type="match status" value="1"/>
</dbReference>
<dbReference type="PROSITE" id="PS51733">
    <property type="entry name" value="BPL_LPL_CATALYTIC"/>
    <property type="match status" value="1"/>
</dbReference>
<reference key="1">
    <citation type="journal article" date="2006" name="J. Bacteriol.">
        <title>Complete genome sequence of Yersinia pestis strains Antiqua and Nepal516: evidence of gene reduction in an emerging pathogen.</title>
        <authorList>
            <person name="Chain P.S.G."/>
            <person name="Hu P."/>
            <person name="Malfatti S.A."/>
            <person name="Radnedge L."/>
            <person name="Larimer F."/>
            <person name="Vergez L.M."/>
            <person name="Worsham P."/>
            <person name="Chu M.C."/>
            <person name="Andersen G.L."/>
        </authorList>
    </citation>
    <scope>NUCLEOTIDE SEQUENCE [LARGE SCALE GENOMIC DNA]</scope>
    <source>
        <strain>Antiqua</strain>
    </source>
</reference>
<sequence>MSSLRLLISDSYDPWFNLAVEECIFRQMSPNQRVLFLWRNADTVVIGRAQNPWKECNTRRMEQDGVKLARRSSGGGAVFHDLGNTCFTFMAGKPGYDKTISTQIILNALASLGIQATASGRNDLVVINGEDERKVSGSAYKETKDRGFHHGTLLLNADLSRLADYLNPDPKKLQAKGITSVRSRVTNLVELLPGIDHGKIRTAIEQAFFAYYDEQVSAEVISPQSLPNLPGFTEQFAKQSSWEWNFGQAPAFSHVVDTRFIWGGIELHFDVLHGAIDRCQIFTDSLNPTPLEALAQRLQGAAYRPDAIDKICQHWIDDFPELQTELQQACHWLVEVLR</sequence>
<organism>
    <name type="scientific">Yersinia pestis bv. Antiqua (strain Antiqua)</name>
    <dbReference type="NCBI Taxonomy" id="360102"/>
    <lineage>
        <taxon>Bacteria</taxon>
        <taxon>Pseudomonadati</taxon>
        <taxon>Pseudomonadota</taxon>
        <taxon>Gammaproteobacteria</taxon>
        <taxon>Enterobacterales</taxon>
        <taxon>Yersiniaceae</taxon>
        <taxon>Yersinia</taxon>
    </lineage>
</organism>
<evidence type="ECO:0000255" key="1">
    <source>
        <dbReference type="HAMAP-Rule" id="MF_01602"/>
    </source>
</evidence>
<evidence type="ECO:0000255" key="2">
    <source>
        <dbReference type="PROSITE-ProRule" id="PRU01067"/>
    </source>
</evidence>
<keyword id="KW-0067">ATP-binding</keyword>
<keyword id="KW-0963">Cytoplasm</keyword>
<keyword id="KW-0436">Ligase</keyword>
<keyword id="KW-0547">Nucleotide-binding</keyword>
<feature type="chain" id="PRO_1000069393" description="Lipoate-protein ligase A">
    <location>
        <begin position="1"/>
        <end position="338"/>
    </location>
</feature>
<feature type="domain" description="BPL/LPL catalytic" evidence="2">
    <location>
        <begin position="29"/>
        <end position="216"/>
    </location>
</feature>
<feature type="binding site" evidence="1">
    <location>
        <position position="71"/>
    </location>
    <ligand>
        <name>ATP</name>
        <dbReference type="ChEBI" id="CHEBI:30616"/>
    </ligand>
</feature>
<feature type="binding site" evidence="1">
    <location>
        <begin position="76"/>
        <end position="79"/>
    </location>
    <ligand>
        <name>ATP</name>
        <dbReference type="ChEBI" id="CHEBI:30616"/>
    </ligand>
</feature>
<feature type="binding site" evidence="1">
    <location>
        <position position="134"/>
    </location>
    <ligand>
        <name>(R)-lipoate</name>
        <dbReference type="ChEBI" id="CHEBI:83088"/>
    </ligand>
</feature>
<feature type="binding site" evidence="1">
    <location>
        <position position="134"/>
    </location>
    <ligand>
        <name>ATP</name>
        <dbReference type="ChEBI" id="CHEBI:30616"/>
    </ligand>
</feature>